<dbReference type="EC" id="7.4.2.8" evidence="1"/>
<dbReference type="EMBL" id="CP000386">
    <property type="protein sequence ID" value="ABG04582.1"/>
    <property type="molecule type" value="Genomic_DNA"/>
</dbReference>
<dbReference type="RefSeq" id="WP_011564599.1">
    <property type="nucleotide sequence ID" value="NC_008148.1"/>
</dbReference>
<dbReference type="SMR" id="Q1AVJ6"/>
<dbReference type="STRING" id="266117.Rxyl_1621"/>
<dbReference type="KEGG" id="rxy:Rxyl_1621"/>
<dbReference type="eggNOG" id="COG0653">
    <property type="taxonomic scope" value="Bacteria"/>
</dbReference>
<dbReference type="HOGENOM" id="CLU_005314_3_0_11"/>
<dbReference type="OrthoDB" id="9805579at2"/>
<dbReference type="PhylomeDB" id="Q1AVJ6"/>
<dbReference type="Proteomes" id="UP000006637">
    <property type="component" value="Chromosome"/>
</dbReference>
<dbReference type="GO" id="GO:0031522">
    <property type="term" value="C:cell envelope Sec protein transport complex"/>
    <property type="evidence" value="ECO:0007669"/>
    <property type="project" value="TreeGrafter"/>
</dbReference>
<dbReference type="GO" id="GO:0005829">
    <property type="term" value="C:cytosol"/>
    <property type="evidence" value="ECO:0007669"/>
    <property type="project" value="TreeGrafter"/>
</dbReference>
<dbReference type="GO" id="GO:0005886">
    <property type="term" value="C:plasma membrane"/>
    <property type="evidence" value="ECO:0007669"/>
    <property type="project" value="UniProtKB-SubCell"/>
</dbReference>
<dbReference type="GO" id="GO:0005524">
    <property type="term" value="F:ATP binding"/>
    <property type="evidence" value="ECO:0007669"/>
    <property type="project" value="UniProtKB-UniRule"/>
</dbReference>
<dbReference type="GO" id="GO:0046872">
    <property type="term" value="F:metal ion binding"/>
    <property type="evidence" value="ECO:0007669"/>
    <property type="project" value="UniProtKB-KW"/>
</dbReference>
<dbReference type="GO" id="GO:0008564">
    <property type="term" value="F:protein-exporting ATPase activity"/>
    <property type="evidence" value="ECO:0007669"/>
    <property type="project" value="UniProtKB-EC"/>
</dbReference>
<dbReference type="GO" id="GO:0065002">
    <property type="term" value="P:intracellular protein transmembrane transport"/>
    <property type="evidence" value="ECO:0007669"/>
    <property type="project" value="UniProtKB-UniRule"/>
</dbReference>
<dbReference type="GO" id="GO:0017038">
    <property type="term" value="P:protein import"/>
    <property type="evidence" value="ECO:0007669"/>
    <property type="project" value="InterPro"/>
</dbReference>
<dbReference type="GO" id="GO:0006605">
    <property type="term" value="P:protein targeting"/>
    <property type="evidence" value="ECO:0007669"/>
    <property type="project" value="UniProtKB-UniRule"/>
</dbReference>
<dbReference type="GO" id="GO:0043952">
    <property type="term" value="P:protein transport by the Sec complex"/>
    <property type="evidence" value="ECO:0007669"/>
    <property type="project" value="TreeGrafter"/>
</dbReference>
<dbReference type="CDD" id="cd17928">
    <property type="entry name" value="DEXDc_SecA"/>
    <property type="match status" value="1"/>
</dbReference>
<dbReference type="CDD" id="cd18803">
    <property type="entry name" value="SF2_C_secA"/>
    <property type="match status" value="1"/>
</dbReference>
<dbReference type="FunFam" id="3.40.50.300:FF:000113">
    <property type="entry name" value="Preprotein translocase subunit SecA"/>
    <property type="match status" value="1"/>
</dbReference>
<dbReference type="FunFam" id="3.40.50.300:FF:000334">
    <property type="entry name" value="Protein translocase subunit SecA"/>
    <property type="match status" value="1"/>
</dbReference>
<dbReference type="FunFam" id="3.90.1440.10:FF:000002">
    <property type="entry name" value="Protein translocase subunit SecA"/>
    <property type="match status" value="1"/>
</dbReference>
<dbReference type="Gene3D" id="1.10.3060.10">
    <property type="entry name" value="Helical scaffold and wing domains of SecA"/>
    <property type="match status" value="1"/>
</dbReference>
<dbReference type="Gene3D" id="3.40.50.300">
    <property type="entry name" value="P-loop containing nucleotide triphosphate hydrolases"/>
    <property type="match status" value="2"/>
</dbReference>
<dbReference type="Gene3D" id="3.90.1440.10">
    <property type="entry name" value="SecA, preprotein cross-linking domain"/>
    <property type="match status" value="1"/>
</dbReference>
<dbReference type="HAMAP" id="MF_01382">
    <property type="entry name" value="SecA"/>
    <property type="match status" value="1"/>
</dbReference>
<dbReference type="InterPro" id="IPR014001">
    <property type="entry name" value="Helicase_ATP-bd"/>
</dbReference>
<dbReference type="InterPro" id="IPR001650">
    <property type="entry name" value="Helicase_C-like"/>
</dbReference>
<dbReference type="InterPro" id="IPR027417">
    <property type="entry name" value="P-loop_NTPase"/>
</dbReference>
<dbReference type="InterPro" id="IPR004027">
    <property type="entry name" value="SEC_C_motif"/>
</dbReference>
<dbReference type="InterPro" id="IPR000185">
    <property type="entry name" value="SecA"/>
</dbReference>
<dbReference type="InterPro" id="IPR020937">
    <property type="entry name" value="SecA_CS"/>
</dbReference>
<dbReference type="InterPro" id="IPR011115">
    <property type="entry name" value="SecA_DEAD"/>
</dbReference>
<dbReference type="InterPro" id="IPR014018">
    <property type="entry name" value="SecA_motor_DEAD"/>
</dbReference>
<dbReference type="InterPro" id="IPR011130">
    <property type="entry name" value="SecA_preprotein_X-link_dom"/>
</dbReference>
<dbReference type="InterPro" id="IPR044722">
    <property type="entry name" value="SecA_SF2_C"/>
</dbReference>
<dbReference type="InterPro" id="IPR011116">
    <property type="entry name" value="SecA_Wing/Scaffold"/>
</dbReference>
<dbReference type="InterPro" id="IPR036266">
    <property type="entry name" value="SecA_Wing/Scaffold_sf"/>
</dbReference>
<dbReference type="InterPro" id="IPR036670">
    <property type="entry name" value="SecA_X-link_sf"/>
</dbReference>
<dbReference type="NCBIfam" id="NF009538">
    <property type="entry name" value="PRK12904.1"/>
    <property type="match status" value="1"/>
</dbReference>
<dbReference type="NCBIfam" id="TIGR00963">
    <property type="entry name" value="secA"/>
    <property type="match status" value="1"/>
</dbReference>
<dbReference type="PANTHER" id="PTHR30612:SF0">
    <property type="entry name" value="CHLOROPLAST PROTEIN-TRANSPORTING ATPASE"/>
    <property type="match status" value="1"/>
</dbReference>
<dbReference type="PANTHER" id="PTHR30612">
    <property type="entry name" value="SECA INNER MEMBRANE COMPONENT OF SEC PROTEIN SECRETION SYSTEM"/>
    <property type="match status" value="1"/>
</dbReference>
<dbReference type="Pfam" id="PF21090">
    <property type="entry name" value="P-loop_SecA"/>
    <property type="match status" value="1"/>
</dbReference>
<dbReference type="Pfam" id="PF02810">
    <property type="entry name" value="SEC-C"/>
    <property type="match status" value="1"/>
</dbReference>
<dbReference type="Pfam" id="PF07517">
    <property type="entry name" value="SecA_DEAD"/>
    <property type="match status" value="1"/>
</dbReference>
<dbReference type="Pfam" id="PF01043">
    <property type="entry name" value="SecA_PP_bind"/>
    <property type="match status" value="1"/>
</dbReference>
<dbReference type="Pfam" id="PF07516">
    <property type="entry name" value="SecA_SW"/>
    <property type="match status" value="1"/>
</dbReference>
<dbReference type="PRINTS" id="PR00906">
    <property type="entry name" value="SECA"/>
</dbReference>
<dbReference type="SMART" id="SM00957">
    <property type="entry name" value="SecA_DEAD"/>
    <property type="match status" value="1"/>
</dbReference>
<dbReference type="SMART" id="SM00958">
    <property type="entry name" value="SecA_PP_bind"/>
    <property type="match status" value="1"/>
</dbReference>
<dbReference type="SUPFAM" id="SSF81886">
    <property type="entry name" value="Helical scaffold and wing domains of SecA"/>
    <property type="match status" value="1"/>
</dbReference>
<dbReference type="SUPFAM" id="SSF52540">
    <property type="entry name" value="P-loop containing nucleoside triphosphate hydrolases"/>
    <property type="match status" value="2"/>
</dbReference>
<dbReference type="SUPFAM" id="SSF81767">
    <property type="entry name" value="Pre-protein crosslinking domain of SecA"/>
    <property type="match status" value="1"/>
</dbReference>
<dbReference type="PROSITE" id="PS01312">
    <property type="entry name" value="SECA"/>
    <property type="match status" value="1"/>
</dbReference>
<dbReference type="PROSITE" id="PS51196">
    <property type="entry name" value="SECA_MOTOR_DEAD"/>
    <property type="match status" value="1"/>
</dbReference>
<organism>
    <name type="scientific">Rubrobacter xylanophilus (strain DSM 9941 / JCM 11954 / NBRC 16129 / PRD-1)</name>
    <dbReference type="NCBI Taxonomy" id="266117"/>
    <lineage>
        <taxon>Bacteria</taxon>
        <taxon>Bacillati</taxon>
        <taxon>Actinomycetota</taxon>
        <taxon>Rubrobacteria</taxon>
        <taxon>Rubrobacterales</taxon>
        <taxon>Rubrobacteraceae</taxon>
        <taxon>Rubrobacter</taxon>
    </lineage>
</organism>
<name>SECA_RUBXD</name>
<protein>
    <recommendedName>
        <fullName evidence="1">Protein translocase subunit SecA</fullName>
        <ecNumber evidence="1">7.4.2.8</ecNumber>
    </recommendedName>
</protein>
<reference key="1">
    <citation type="submission" date="2006-06" db="EMBL/GenBank/DDBJ databases">
        <title>Complete sequence of Rubrobacter xylanophilus DSM 9941.</title>
        <authorList>
            <consortium name="US DOE Joint Genome Institute"/>
            <person name="Copeland A."/>
            <person name="Lucas S."/>
            <person name="Lapidus A."/>
            <person name="Barry K."/>
            <person name="Detter J.C."/>
            <person name="Glavina del Rio T."/>
            <person name="Hammon N."/>
            <person name="Israni S."/>
            <person name="Dalin E."/>
            <person name="Tice H."/>
            <person name="Pitluck S."/>
            <person name="Munk A.C."/>
            <person name="Brettin T."/>
            <person name="Bruce D."/>
            <person name="Han C."/>
            <person name="Tapia R."/>
            <person name="Gilna P."/>
            <person name="Schmutz J."/>
            <person name="Larimer F."/>
            <person name="Land M."/>
            <person name="Hauser L."/>
            <person name="Kyrpides N."/>
            <person name="Lykidis A."/>
            <person name="da Costa M.S."/>
            <person name="Rainey F.A."/>
            <person name="Empadinhas N."/>
            <person name="Jolivet E."/>
            <person name="Battista J.R."/>
            <person name="Richardson P."/>
        </authorList>
    </citation>
    <scope>NUCLEOTIDE SEQUENCE [LARGE SCALE GENOMIC DNA]</scope>
    <source>
        <strain>DSM 9941 / JCM 11954 / NBRC 16129 / PRD-1</strain>
    </source>
</reference>
<keyword id="KW-0067">ATP-binding</keyword>
<keyword id="KW-1003">Cell membrane</keyword>
<keyword id="KW-0963">Cytoplasm</keyword>
<keyword id="KW-0472">Membrane</keyword>
<keyword id="KW-0479">Metal-binding</keyword>
<keyword id="KW-0547">Nucleotide-binding</keyword>
<keyword id="KW-0653">Protein transport</keyword>
<keyword id="KW-1185">Reference proteome</keyword>
<keyword id="KW-1278">Translocase</keyword>
<keyword id="KW-0811">Translocation</keyword>
<keyword id="KW-0813">Transport</keyword>
<keyword id="KW-0862">Zinc</keyword>
<comment type="function">
    <text evidence="1">Part of the Sec protein translocase complex. Interacts with the SecYEG preprotein conducting channel. Has a central role in coupling the hydrolysis of ATP to the transfer of proteins into and across the cell membrane, serving as an ATP-driven molecular motor driving the stepwise translocation of polypeptide chains across the membrane.</text>
</comment>
<comment type="catalytic activity">
    <reaction evidence="1">
        <text>ATP + H2O + cellular proteinSide 1 = ADP + phosphate + cellular proteinSide 2.</text>
        <dbReference type="EC" id="7.4.2.8"/>
    </reaction>
</comment>
<comment type="cofactor">
    <cofactor evidence="1">
        <name>Zn(2+)</name>
        <dbReference type="ChEBI" id="CHEBI:29105"/>
    </cofactor>
    <text evidence="1">May bind 1 zinc ion per subunit.</text>
</comment>
<comment type="subunit">
    <text evidence="1">Monomer and homodimer. Part of the essential Sec protein translocation apparatus which comprises SecA, SecYEG and auxiliary proteins SecDF. Other proteins may also be involved.</text>
</comment>
<comment type="subcellular location">
    <subcellularLocation>
        <location evidence="1">Cell membrane</location>
        <topology evidence="1">Peripheral membrane protein</topology>
        <orientation evidence="1">Cytoplasmic side</orientation>
    </subcellularLocation>
    <subcellularLocation>
        <location evidence="1">Cytoplasm</location>
    </subcellularLocation>
    <text evidence="1">Distribution is 50-50.</text>
</comment>
<comment type="similarity">
    <text evidence="1">Belongs to the SecA family.</text>
</comment>
<sequence>MNLLTKILRMGEGRKLKALQRTVEEVSAREPEVRGLSDAALRARTDEFKERLQGGETLDDLLPEAFAVVREVARRTLGLRPFDVQVMGGVVLHQGKIAEMKTGEGKTLVATMPVYLNALAGRGVHVVTVNDYLARRDAEWMGPIYEFLGLEVGVIQESMGFEERKKAYAADITYGTNAQFGFDYLRDNIATSPDQLVQRELHYAIVDEVDSILIDEARTPLIISGLPESAADLYYRFAAIVPRLREGEDYEVDEKKRQVAPTEQGVAKVEKALGIPNLYDGVNTNLVNHLIQALRAHTLFRRDREYIVRDGQVFIVDEFTGRVLEGRRYSEGLHQAIEAKEGVEIKEENQTVATITIQNYFRQYEKLAGMTGTAATEADEFMHTYKMEVVSIPTHRPMIRVDRDDLVYRTKKAKYAAVIDDIVERHRKGQPVLVGTVSVEVSEHLSALLKRRGIKHNVLNAKHHEREAEIIAEAGKKGAVTIATNMAGRGTDIKLGGSDESGGGEEWTEEHERLASEIMEKYPTITRDMLEGRSLESLEVVNLGGLYVLGTERHEARRIDNQLRGRSGRQGDPGESRFYLSFEDDLLRLFGGQRMQSLMERIGLEEDEAIEAGMVSNSVRRAQEQVESRNFQMRKRILEYDDVLNKQREVIYAIRREILMGEKVDTMSYVEDVLTDVISRYASEDVYPEEWDLEGLATELNRFYPCQVDFSSLDIESATADQVREMVLEDARERLEERRAEWEERTAELERRGLARADGLDSFEEAERRTLLSVVDSRWREHLYEMEYLREGIGWRGLGQRDPLVEYKREGYDLFVEMERGIREDYVTYIYRIENLKLSETDVERLSYSGGGEEPNQRPKSPRRRSERKIGPNEPCPCGSGKKFKKCHGRVGAPPLPTSQSQ</sequence>
<accession>Q1AVJ6</accession>
<evidence type="ECO:0000255" key="1">
    <source>
        <dbReference type="HAMAP-Rule" id="MF_01382"/>
    </source>
</evidence>
<evidence type="ECO:0000256" key="2">
    <source>
        <dbReference type="SAM" id="MobiDB-lite"/>
    </source>
</evidence>
<gene>
    <name evidence="1" type="primary">secA</name>
    <name type="ordered locus">Rxyl_1621</name>
</gene>
<feature type="chain" id="PRO_0000318419" description="Protein translocase subunit SecA">
    <location>
        <begin position="1"/>
        <end position="902"/>
    </location>
</feature>
<feature type="region of interest" description="Disordered" evidence="2">
    <location>
        <begin position="846"/>
        <end position="902"/>
    </location>
</feature>
<feature type="binding site" evidence="1">
    <location>
        <position position="85"/>
    </location>
    <ligand>
        <name>ATP</name>
        <dbReference type="ChEBI" id="CHEBI:30616"/>
    </ligand>
</feature>
<feature type="binding site" evidence="1">
    <location>
        <begin position="103"/>
        <end position="107"/>
    </location>
    <ligand>
        <name>ATP</name>
        <dbReference type="ChEBI" id="CHEBI:30616"/>
    </ligand>
</feature>
<feature type="binding site" evidence="1">
    <location>
        <position position="492"/>
    </location>
    <ligand>
        <name>ATP</name>
        <dbReference type="ChEBI" id="CHEBI:30616"/>
    </ligand>
</feature>
<feature type="binding site" evidence="1">
    <location>
        <position position="876"/>
    </location>
    <ligand>
        <name>Zn(2+)</name>
        <dbReference type="ChEBI" id="CHEBI:29105"/>
    </ligand>
</feature>
<feature type="binding site" evidence="1">
    <location>
        <position position="878"/>
    </location>
    <ligand>
        <name>Zn(2+)</name>
        <dbReference type="ChEBI" id="CHEBI:29105"/>
    </ligand>
</feature>
<feature type="binding site" evidence="1">
    <location>
        <position position="887"/>
    </location>
    <ligand>
        <name>Zn(2+)</name>
        <dbReference type="ChEBI" id="CHEBI:29105"/>
    </ligand>
</feature>
<feature type="binding site" evidence="1">
    <location>
        <position position="888"/>
    </location>
    <ligand>
        <name>Zn(2+)</name>
        <dbReference type="ChEBI" id="CHEBI:29105"/>
    </ligand>
</feature>
<proteinExistence type="inferred from homology"/>